<gene>
    <name evidence="1" type="primary">rpoC2</name>
</gene>
<evidence type="ECO:0000255" key="1">
    <source>
        <dbReference type="HAMAP-Rule" id="MF_01324"/>
    </source>
</evidence>
<sequence>MEVLMAKGANLVFHNKVIDGIAMKRLISRFIDHFGMAYTSHILDQVKTLGFQQATATSISLGIDDLLTIPSKGWLVQDAEQQSFILEKQHHYGNIHAVEKLRQSIEIWYATSEHLRQEMNPNFRMTDPYNPVHMMSFSGARGNASQVHQLVGMRGLMSDPQGQMIDLPIQSNLREGLSLTEYIISCYGARKGVVDTAVRTSDAGYLTRRLVEVVQHVVVRRRDCGTTRGISVSPQTGTIPEILFIQTLIGRVLADDIYKGPRCIAARNQDIGVGLVNRLITFRVQTISIRTPFTCRSTSWICRLCYGRSPTHGDLVELGEAVGIIAGQSIGEPGTQLTLRTFHTGGVFTGGTAVHVRAPSNGKIKFNEDLVHPTRTRHGHPAFLCYIDLAVTIESEDIIHNVNIPPKSFLLVQKDQYVESEQVIAEIRAGTSTLNFKEKVRKHIYSDSQGEMHWSTDVDHAPEFTYGNVHLLPKTSHLWILAGRPHKSRVATRSLHKDQDQTNAHFLSVEQRYISNSSVINAYMRHTFFSSDLSSTNSNKGDSISDYSERKRIVRTRHSNLIYPAKNSYLLGKRRRNRFMTTFQSIQELEKELRAPSGISIDIPLNGSFRRNSILAYFDDPRYRRESAGITKYGTIEAHSIKKKEGLIEYRGVNEFRAKYQMQVDRFFFIPEEVHILPRSSAIMVRNNSIIGVDTQITLTTRSRVGGLVRVEKKKKKIGLKIFSGNIHFPGKTDKISRHRGILIPPGRGQTKLKNWSYVQRITPTKKRYFVLIRPAITYEITDGISLSTLFPQDLLQERDKVQLRVVNYILSGNGKPIRGISDTSIQLVRTCLVLNWDHDKKSSSIEESRASFVEVKTNDMMRDFLRIDLVKSTISYAGKRNDPSGSGLLSDNESDRMNPFYSIYIYSKARLQQPFSQNNETVRTLLNRTKEFQSFIILSSANCFRMGPFKGLKYYKELDPIIPIKNSSGPFGTSLQIANFYSFYRLITQDKILVTNYLQLDNLKQTFWVMKYYFIDDNRKIYNPDPVSNIVLNSFKLNWYCLHHNYYEETSARMGLGQFLCENVCLAKNGPRLKAGQVLIVQVDSVVIRAAKPYLATPGATVHGHYGEIIYEGDTLVTFIYEKSRSGDITQGLPKVEQVLEVRSLESISMNLERRIDAWNERITGILGLPWGFVVGAELTIVQSRISLVNKIQKVYRSQGVQIHNRHLEIIVHQITSKVLVSEDGMSNVFLPGELIGLLRAERTGRALEEVISYRAVLVGITRASLNTHSFISEASFQETARVLAKAALRGRIDWLKGLKENVVLGGKIPVGTGFKGLVHPSSQHKSIPLKNKKKNLFEGEINDILFYYREFFNIEFLCFKNYQ</sequence>
<comment type="function">
    <text evidence="1">DNA-dependent RNA polymerase catalyzes the transcription of DNA into RNA using the four ribonucleoside triphosphates as substrates.</text>
</comment>
<comment type="catalytic activity">
    <reaction evidence="1">
        <text>RNA(n) + a ribonucleoside 5'-triphosphate = RNA(n+1) + diphosphate</text>
        <dbReference type="Rhea" id="RHEA:21248"/>
        <dbReference type="Rhea" id="RHEA-COMP:14527"/>
        <dbReference type="Rhea" id="RHEA-COMP:17342"/>
        <dbReference type="ChEBI" id="CHEBI:33019"/>
        <dbReference type="ChEBI" id="CHEBI:61557"/>
        <dbReference type="ChEBI" id="CHEBI:140395"/>
        <dbReference type="EC" id="2.7.7.6"/>
    </reaction>
</comment>
<comment type="cofactor">
    <cofactor evidence="1">
        <name>Zn(2+)</name>
        <dbReference type="ChEBI" id="CHEBI:29105"/>
    </cofactor>
    <text evidence="1">Binds 1 Zn(2+) ion per subunit.</text>
</comment>
<comment type="subunit">
    <text evidence="1">In plastids the minimal PEP RNA polymerase catalytic core is composed of four subunits: alpha, beta, beta', and beta''. When a (nuclear-encoded) sigma factor is associated with the core the holoenzyme is formed, which can initiate transcription.</text>
</comment>
<comment type="subcellular location">
    <subcellularLocation>
        <location evidence="1">Plastid</location>
        <location evidence="1">Chloroplast</location>
    </subcellularLocation>
</comment>
<comment type="similarity">
    <text evidence="1">Belongs to the RNA polymerase beta' chain family. RpoC2 subfamily.</text>
</comment>
<name>RPOC2_FAGEA</name>
<keyword id="KW-0150">Chloroplast</keyword>
<keyword id="KW-0240">DNA-directed RNA polymerase</keyword>
<keyword id="KW-0479">Metal-binding</keyword>
<keyword id="KW-0548">Nucleotidyltransferase</keyword>
<keyword id="KW-0934">Plastid</keyword>
<keyword id="KW-0804">Transcription</keyword>
<keyword id="KW-0808">Transferase</keyword>
<keyword id="KW-0862">Zinc</keyword>
<dbReference type="EC" id="2.7.7.6" evidence="1"/>
<dbReference type="EMBL" id="EU254477">
    <property type="protein sequence ID" value="ABY79722.1"/>
    <property type="molecule type" value="Genomic_DNA"/>
</dbReference>
<dbReference type="RefSeq" id="YP_001936507.1">
    <property type="nucleotide sequence ID" value="NC_010776.1"/>
</dbReference>
<dbReference type="SMR" id="B2XWN9"/>
<dbReference type="GeneID" id="6336004"/>
<dbReference type="GO" id="GO:0009507">
    <property type="term" value="C:chloroplast"/>
    <property type="evidence" value="ECO:0007669"/>
    <property type="project" value="UniProtKB-SubCell"/>
</dbReference>
<dbReference type="GO" id="GO:0000428">
    <property type="term" value="C:DNA-directed RNA polymerase complex"/>
    <property type="evidence" value="ECO:0007669"/>
    <property type="project" value="UniProtKB-KW"/>
</dbReference>
<dbReference type="GO" id="GO:0005739">
    <property type="term" value="C:mitochondrion"/>
    <property type="evidence" value="ECO:0007669"/>
    <property type="project" value="GOC"/>
</dbReference>
<dbReference type="GO" id="GO:0003677">
    <property type="term" value="F:DNA binding"/>
    <property type="evidence" value="ECO:0007669"/>
    <property type="project" value="UniProtKB-UniRule"/>
</dbReference>
<dbReference type="GO" id="GO:0003899">
    <property type="term" value="F:DNA-directed RNA polymerase activity"/>
    <property type="evidence" value="ECO:0007669"/>
    <property type="project" value="UniProtKB-UniRule"/>
</dbReference>
<dbReference type="GO" id="GO:0008270">
    <property type="term" value="F:zinc ion binding"/>
    <property type="evidence" value="ECO:0007669"/>
    <property type="project" value="UniProtKB-UniRule"/>
</dbReference>
<dbReference type="GO" id="GO:0006351">
    <property type="term" value="P:DNA-templated transcription"/>
    <property type="evidence" value="ECO:0007669"/>
    <property type="project" value="UniProtKB-UniRule"/>
</dbReference>
<dbReference type="CDD" id="cd02655">
    <property type="entry name" value="RNAP_beta'_C"/>
    <property type="match status" value="1"/>
</dbReference>
<dbReference type="FunFam" id="1.10.132.30:FF:000002">
    <property type="entry name" value="DNA-directed RNA polymerase subunit beta"/>
    <property type="match status" value="1"/>
</dbReference>
<dbReference type="Gene3D" id="1.10.132.30">
    <property type="match status" value="1"/>
</dbReference>
<dbReference type="Gene3D" id="1.10.150.390">
    <property type="match status" value="1"/>
</dbReference>
<dbReference type="Gene3D" id="1.10.1790.20">
    <property type="match status" value="1"/>
</dbReference>
<dbReference type="Gene3D" id="1.10.274.100">
    <property type="entry name" value="RNA polymerase Rpb1, domain 3"/>
    <property type="match status" value="1"/>
</dbReference>
<dbReference type="HAMAP" id="MF_01324">
    <property type="entry name" value="RNApol_bact_RpoC2"/>
    <property type="match status" value="1"/>
</dbReference>
<dbReference type="InterPro" id="IPR012756">
    <property type="entry name" value="DNA-dir_RpoC2_beta_pp"/>
</dbReference>
<dbReference type="InterPro" id="IPR050254">
    <property type="entry name" value="RNA_pol_beta''_euk"/>
</dbReference>
<dbReference type="InterPro" id="IPR042102">
    <property type="entry name" value="RNA_pol_Rpb1_3_sf"/>
</dbReference>
<dbReference type="InterPro" id="IPR007083">
    <property type="entry name" value="RNA_pol_Rpb1_4"/>
</dbReference>
<dbReference type="InterPro" id="IPR007081">
    <property type="entry name" value="RNA_pol_Rpb1_5"/>
</dbReference>
<dbReference type="InterPro" id="IPR038120">
    <property type="entry name" value="Rpb1_funnel_sf"/>
</dbReference>
<dbReference type="NCBIfam" id="TIGR02388">
    <property type="entry name" value="rpoC2_cyan"/>
    <property type="match status" value="1"/>
</dbReference>
<dbReference type="PANTHER" id="PTHR34995">
    <property type="entry name" value="DNA-DIRECTED RNA POLYMERASE SUBUNIT BETA"/>
    <property type="match status" value="1"/>
</dbReference>
<dbReference type="PANTHER" id="PTHR34995:SF1">
    <property type="entry name" value="DNA-DIRECTED RNA POLYMERASE SUBUNIT BETA"/>
    <property type="match status" value="1"/>
</dbReference>
<dbReference type="Pfam" id="PF05000">
    <property type="entry name" value="RNA_pol_Rpb1_4"/>
    <property type="match status" value="1"/>
</dbReference>
<dbReference type="Pfam" id="PF04998">
    <property type="entry name" value="RNA_pol_Rpb1_5"/>
    <property type="match status" value="2"/>
</dbReference>
<dbReference type="SUPFAM" id="SSF64484">
    <property type="entry name" value="beta and beta-prime subunits of DNA dependent RNA-polymerase"/>
    <property type="match status" value="1"/>
</dbReference>
<protein>
    <recommendedName>
        <fullName evidence="1">DNA-directed RNA polymerase subunit beta''</fullName>
        <ecNumber evidence="1">2.7.7.6</ecNumber>
    </recommendedName>
    <alternativeName>
        <fullName evidence="1">PEP</fullName>
    </alternativeName>
    <alternativeName>
        <fullName evidence="1">Plastid-encoded RNA polymerase subunit beta''</fullName>
        <shortName evidence="1">RNA polymerase subunit beta''</shortName>
    </alternativeName>
</protein>
<accession>B2XWN9</accession>
<proteinExistence type="inferred from homology"/>
<feature type="chain" id="PRO_0000353561" description="DNA-directed RNA polymerase subunit beta''">
    <location>
        <begin position="1"/>
        <end position="1365"/>
    </location>
</feature>
<feature type="binding site" evidence="1">
    <location>
        <position position="224"/>
    </location>
    <ligand>
        <name>Zn(2+)</name>
        <dbReference type="ChEBI" id="CHEBI:29105"/>
    </ligand>
</feature>
<feature type="binding site" evidence="1">
    <location>
        <position position="295"/>
    </location>
    <ligand>
        <name>Zn(2+)</name>
        <dbReference type="ChEBI" id="CHEBI:29105"/>
    </ligand>
</feature>
<feature type="binding site" evidence="1">
    <location>
        <position position="302"/>
    </location>
    <ligand>
        <name>Zn(2+)</name>
        <dbReference type="ChEBI" id="CHEBI:29105"/>
    </ligand>
</feature>
<feature type="binding site" evidence="1">
    <location>
        <position position="305"/>
    </location>
    <ligand>
        <name>Zn(2+)</name>
        <dbReference type="ChEBI" id="CHEBI:29105"/>
    </ligand>
</feature>
<organism>
    <name type="scientific">Fagopyrum esculentum subsp. ancestrale</name>
    <name type="common">Wild buckwheat</name>
    <dbReference type="NCBI Taxonomy" id="180217"/>
    <lineage>
        <taxon>Eukaryota</taxon>
        <taxon>Viridiplantae</taxon>
        <taxon>Streptophyta</taxon>
        <taxon>Embryophyta</taxon>
        <taxon>Tracheophyta</taxon>
        <taxon>Spermatophyta</taxon>
        <taxon>Magnoliopsida</taxon>
        <taxon>eudicotyledons</taxon>
        <taxon>Gunneridae</taxon>
        <taxon>Pentapetalae</taxon>
        <taxon>Caryophyllales</taxon>
        <taxon>Polygonaceae</taxon>
        <taxon>Polygonoideae</taxon>
        <taxon>Fagopyreae</taxon>
        <taxon>Fagopyrum</taxon>
    </lineage>
</organism>
<geneLocation type="chloroplast"/>
<reference key="1">
    <citation type="journal article" date="2008" name="BMC Plant Biol.">
        <title>Comparative chloroplast genomics and phylogenetics of Fagopyrum esculentum ssp. ancestrale - a wild ancestor of cultivated buckwheat.</title>
        <authorList>
            <person name="Logacheva M.D."/>
            <person name="Samigullin T.H."/>
            <person name="Dhingra A."/>
            <person name="Penin A.A."/>
        </authorList>
    </citation>
    <scope>NUCLEOTIDE SEQUENCE [LARGE SCALE GENOMIC DNA]</scope>
</reference>